<evidence type="ECO:0000255" key="1">
    <source>
        <dbReference type="HAMAP-Rule" id="MF_00092"/>
    </source>
</evidence>
<evidence type="ECO:0000256" key="2">
    <source>
        <dbReference type="SAM" id="MobiDB-lite"/>
    </source>
</evidence>
<sequence length="822" mass="90670">MSDSTNLTIAEETLALLEWPRLCQHLSTFTQTPLGAIAARYLLPPSQWEESRELLAQTQAVESIENSPESNWHFKGIADITEPLARVERGGLVTGLELLAIAGTLAGVRRLRRVIEERDDLEILQTLVAEVRTLPELEQAIHHCLGEDGKVAERASPKLGEIRQKLKAVREQIQQKLQKIIQRQSNALQEAVITQRGDRFVLPIKAGYKEQMPGIVHDSSASGNTLYVEPQAIVELGNKLRQARRQEQTEEERILRQLSDQVLEVLLDLEHLLAIATRLDLATARVRYSFWLGAHPPQWLTPGDEKPITLRQLRHPLLHWQAEKEGGPAVVPITLTIDSQIRVIAITGPNTGGKTVTLKTLGLVALMAKVGLYIPAKETVEMPWFAQILADIGDEQSLQQNLSTFSGHICRIIRILQALPSGVQDVLDPEIDSPNHPIFPSLVLLDEVGAGTDPTEGSALAIALLRHLADQPCLTVATTHYGELKALKYQDARFENASVEFDDQSLSPTYRLLWGIPGRSNALAIAQRLGLPLAIVEQAKDKLGGFSEDINQVIAGLESQRREQEQKAANAQKLLQETEIFYQQVSQKAASLQARERELKSYQDQEVQQAIAAAKEEIAKVIRQLQRGKPSAQKAQQATEILGQIQAEQKAKVAPKPIGYQPTVGERIRIPSFGQTAEVTQVNATAQTVNVTLGLMKMTVPMADIESLNGKKVEPPPKSEPVPKKVKAEPPATEAKSPPVLVRTEKNTLDCRGDRLERAESRLEKALNQALDAGVLWIIHGKGTGKLRQGVQEYLSHHPLVKSYALAPQNDGGAGVTIAYLR</sequence>
<keyword id="KW-0067">ATP-binding</keyword>
<keyword id="KW-0238">DNA-binding</keyword>
<keyword id="KW-0255">Endonuclease</keyword>
<keyword id="KW-0378">Hydrolase</keyword>
<keyword id="KW-0540">Nuclease</keyword>
<keyword id="KW-0547">Nucleotide-binding</keyword>
<keyword id="KW-1185">Reference proteome</keyword>
<keyword id="KW-0694">RNA-binding</keyword>
<keyword id="KW-0699">rRNA-binding</keyword>
<gene>
    <name evidence="1" type="primary">mutS2</name>
    <name type="synonym">mutSB</name>
    <name evidence="1" type="synonym">rqcU</name>
    <name type="ordered locus">sll1772</name>
</gene>
<dbReference type="EC" id="3.1.-.-" evidence="1"/>
<dbReference type="EC" id="3.6.4.-" evidence="1"/>
<dbReference type="EMBL" id="BA000022">
    <property type="protein sequence ID" value="BAA17670.1"/>
    <property type="molecule type" value="Genomic_DNA"/>
</dbReference>
<dbReference type="PIR" id="S77112">
    <property type="entry name" value="S77112"/>
</dbReference>
<dbReference type="SMR" id="P73625"/>
<dbReference type="DIP" id="DIP-48807N"/>
<dbReference type="FunCoup" id="P73625">
    <property type="interactions" value="119"/>
</dbReference>
<dbReference type="IntAct" id="P73625">
    <property type="interactions" value="4"/>
</dbReference>
<dbReference type="STRING" id="1148.gene:10498537"/>
<dbReference type="PaxDb" id="1148-1652751"/>
<dbReference type="EnsemblBacteria" id="BAA17670">
    <property type="protein sequence ID" value="BAA17670"/>
    <property type="gene ID" value="BAA17670"/>
</dbReference>
<dbReference type="KEGG" id="syn:sll1772"/>
<dbReference type="eggNOG" id="COG1193">
    <property type="taxonomic scope" value="Bacteria"/>
</dbReference>
<dbReference type="InParanoid" id="P73625"/>
<dbReference type="PhylomeDB" id="P73625"/>
<dbReference type="Proteomes" id="UP000001425">
    <property type="component" value="Chromosome"/>
</dbReference>
<dbReference type="GO" id="GO:0005524">
    <property type="term" value="F:ATP binding"/>
    <property type="evidence" value="ECO:0007669"/>
    <property type="project" value="UniProtKB-UniRule"/>
</dbReference>
<dbReference type="GO" id="GO:0016887">
    <property type="term" value="F:ATP hydrolysis activity"/>
    <property type="evidence" value="ECO:0007669"/>
    <property type="project" value="InterPro"/>
</dbReference>
<dbReference type="GO" id="GO:0140664">
    <property type="term" value="F:ATP-dependent DNA damage sensor activity"/>
    <property type="evidence" value="ECO:0007669"/>
    <property type="project" value="InterPro"/>
</dbReference>
<dbReference type="GO" id="GO:0003690">
    <property type="term" value="F:double-stranded DNA binding"/>
    <property type="evidence" value="ECO:0000318"/>
    <property type="project" value="GO_Central"/>
</dbReference>
<dbReference type="GO" id="GO:0004519">
    <property type="term" value="F:endonuclease activity"/>
    <property type="evidence" value="ECO:0007669"/>
    <property type="project" value="UniProtKB-UniRule"/>
</dbReference>
<dbReference type="GO" id="GO:0030983">
    <property type="term" value="F:mismatched DNA binding"/>
    <property type="evidence" value="ECO:0007669"/>
    <property type="project" value="InterPro"/>
</dbReference>
<dbReference type="GO" id="GO:0043023">
    <property type="term" value="F:ribosomal large subunit binding"/>
    <property type="evidence" value="ECO:0007669"/>
    <property type="project" value="UniProtKB-UniRule"/>
</dbReference>
<dbReference type="GO" id="GO:0019843">
    <property type="term" value="F:rRNA binding"/>
    <property type="evidence" value="ECO:0007669"/>
    <property type="project" value="UniProtKB-UniRule"/>
</dbReference>
<dbReference type="GO" id="GO:0006298">
    <property type="term" value="P:mismatch repair"/>
    <property type="evidence" value="ECO:0007669"/>
    <property type="project" value="InterPro"/>
</dbReference>
<dbReference type="GO" id="GO:0045910">
    <property type="term" value="P:negative regulation of DNA recombination"/>
    <property type="evidence" value="ECO:0007669"/>
    <property type="project" value="InterPro"/>
</dbReference>
<dbReference type="GO" id="GO:0072344">
    <property type="term" value="P:rescue of stalled ribosome"/>
    <property type="evidence" value="ECO:0007669"/>
    <property type="project" value="UniProtKB-UniRule"/>
</dbReference>
<dbReference type="CDD" id="cd03280">
    <property type="entry name" value="ABC_MutS2"/>
    <property type="match status" value="1"/>
</dbReference>
<dbReference type="FunFam" id="3.30.1370.110:FF:000004">
    <property type="entry name" value="Endonuclease MutS2"/>
    <property type="match status" value="1"/>
</dbReference>
<dbReference type="FunFam" id="3.40.50.300:FF:000830">
    <property type="entry name" value="Endonuclease MutS2"/>
    <property type="match status" value="1"/>
</dbReference>
<dbReference type="Gene3D" id="3.30.1370.110">
    <property type="match status" value="1"/>
</dbReference>
<dbReference type="Gene3D" id="3.40.50.300">
    <property type="entry name" value="P-loop containing nucleotide triphosphate hydrolases"/>
    <property type="match status" value="1"/>
</dbReference>
<dbReference type="HAMAP" id="MF_00092">
    <property type="entry name" value="MutS2"/>
    <property type="match status" value="1"/>
</dbReference>
<dbReference type="InterPro" id="IPR000432">
    <property type="entry name" value="DNA_mismatch_repair_MutS_C"/>
</dbReference>
<dbReference type="InterPro" id="IPR007696">
    <property type="entry name" value="DNA_mismatch_repair_MutS_core"/>
</dbReference>
<dbReference type="InterPro" id="IPR036187">
    <property type="entry name" value="DNA_mismatch_repair_MutS_sf"/>
</dbReference>
<dbReference type="InterPro" id="IPR046893">
    <property type="entry name" value="MSSS"/>
</dbReference>
<dbReference type="InterPro" id="IPR045076">
    <property type="entry name" value="MutS"/>
</dbReference>
<dbReference type="InterPro" id="IPR005747">
    <property type="entry name" value="MutS2"/>
</dbReference>
<dbReference type="InterPro" id="IPR027417">
    <property type="entry name" value="P-loop_NTPase"/>
</dbReference>
<dbReference type="InterPro" id="IPR002625">
    <property type="entry name" value="Smr_dom"/>
</dbReference>
<dbReference type="InterPro" id="IPR036063">
    <property type="entry name" value="Smr_dom_sf"/>
</dbReference>
<dbReference type="NCBIfam" id="TIGR01069">
    <property type="entry name" value="mutS2"/>
    <property type="match status" value="1"/>
</dbReference>
<dbReference type="PANTHER" id="PTHR48466:SF2">
    <property type="entry name" value="OS10G0509000 PROTEIN"/>
    <property type="match status" value="1"/>
</dbReference>
<dbReference type="PANTHER" id="PTHR48466">
    <property type="entry name" value="OS10G0509000 PROTEIN-RELATED"/>
    <property type="match status" value="1"/>
</dbReference>
<dbReference type="Pfam" id="PF20297">
    <property type="entry name" value="MSSS"/>
    <property type="match status" value="1"/>
</dbReference>
<dbReference type="Pfam" id="PF00488">
    <property type="entry name" value="MutS_V"/>
    <property type="match status" value="2"/>
</dbReference>
<dbReference type="Pfam" id="PF01713">
    <property type="entry name" value="Smr"/>
    <property type="match status" value="1"/>
</dbReference>
<dbReference type="PIRSF" id="PIRSF005814">
    <property type="entry name" value="MutS_YshD"/>
    <property type="match status" value="1"/>
</dbReference>
<dbReference type="SMART" id="SM00534">
    <property type="entry name" value="MUTSac"/>
    <property type="match status" value="1"/>
</dbReference>
<dbReference type="SMART" id="SM00533">
    <property type="entry name" value="MUTSd"/>
    <property type="match status" value="1"/>
</dbReference>
<dbReference type="SMART" id="SM00463">
    <property type="entry name" value="SMR"/>
    <property type="match status" value="1"/>
</dbReference>
<dbReference type="SUPFAM" id="SSF48334">
    <property type="entry name" value="DNA repair protein MutS, domain III"/>
    <property type="match status" value="1"/>
</dbReference>
<dbReference type="SUPFAM" id="SSF52540">
    <property type="entry name" value="P-loop containing nucleoside triphosphate hydrolases"/>
    <property type="match status" value="1"/>
</dbReference>
<dbReference type="SUPFAM" id="SSF160443">
    <property type="entry name" value="SMR domain-like"/>
    <property type="match status" value="1"/>
</dbReference>
<dbReference type="PROSITE" id="PS00486">
    <property type="entry name" value="DNA_MISMATCH_REPAIR_2"/>
    <property type="match status" value="1"/>
</dbReference>
<dbReference type="PROSITE" id="PS50828">
    <property type="entry name" value="SMR"/>
    <property type="match status" value="1"/>
</dbReference>
<proteinExistence type="inferred from homology"/>
<name>MUTS2_SYNY3</name>
<accession>P73625</accession>
<organism>
    <name type="scientific">Synechocystis sp. (strain ATCC 27184 / PCC 6803 / Kazusa)</name>
    <dbReference type="NCBI Taxonomy" id="1111708"/>
    <lineage>
        <taxon>Bacteria</taxon>
        <taxon>Bacillati</taxon>
        <taxon>Cyanobacteriota</taxon>
        <taxon>Cyanophyceae</taxon>
        <taxon>Synechococcales</taxon>
        <taxon>Merismopediaceae</taxon>
        <taxon>Synechocystis</taxon>
    </lineage>
</organism>
<protein>
    <recommendedName>
        <fullName evidence="1">Endonuclease MutS2</fullName>
        <ecNumber evidence="1">3.1.-.-</ecNumber>
    </recommendedName>
    <alternativeName>
        <fullName evidence="1">Ribosome-associated protein quality control-upstream factor</fullName>
        <shortName evidence="1">RQC-upstream factor</shortName>
        <shortName evidence="1">RqcU</shortName>
        <ecNumber evidence="1">3.6.4.-</ecNumber>
    </alternativeName>
</protein>
<feature type="chain" id="PRO_0000115237" description="Endonuclease MutS2">
    <location>
        <begin position="1"/>
        <end position="822"/>
    </location>
</feature>
<feature type="domain" description="Smr" evidence="1">
    <location>
        <begin position="749"/>
        <end position="822"/>
    </location>
</feature>
<feature type="region of interest" description="Disordered" evidence="2">
    <location>
        <begin position="707"/>
        <end position="737"/>
    </location>
</feature>
<feature type="compositionally biased region" description="Basic and acidic residues" evidence="2">
    <location>
        <begin position="709"/>
        <end position="728"/>
    </location>
</feature>
<feature type="binding site" evidence="1">
    <location>
        <begin position="348"/>
        <end position="355"/>
    </location>
    <ligand>
        <name>ATP</name>
        <dbReference type="ChEBI" id="CHEBI:30616"/>
    </ligand>
</feature>
<reference key="1">
    <citation type="journal article" date="1996" name="DNA Res.">
        <title>Sequence analysis of the genome of the unicellular cyanobacterium Synechocystis sp. strain PCC6803. II. Sequence determination of the entire genome and assignment of potential protein-coding regions.</title>
        <authorList>
            <person name="Kaneko T."/>
            <person name="Sato S."/>
            <person name="Kotani H."/>
            <person name="Tanaka A."/>
            <person name="Asamizu E."/>
            <person name="Nakamura Y."/>
            <person name="Miyajima N."/>
            <person name="Hirosawa M."/>
            <person name="Sugiura M."/>
            <person name="Sasamoto S."/>
            <person name="Kimura T."/>
            <person name="Hosouchi T."/>
            <person name="Matsuno A."/>
            <person name="Muraki A."/>
            <person name="Nakazaki N."/>
            <person name="Naruo K."/>
            <person name="Okumura S."/>
            <person name="Shimpo S."/>
            <person name="Takeuchi C."/>
            <person name="Wada T."/>
            <person name="Watanabe A."/>
            <person name="Yamada M."/>
            <person name="Yasuda M."/>
            <person name="Tabata S."/>
        </authorList>
    </citation>
    <scope>NUCLEOTIDE SEQUENCE [LARGE SCALE GENOMIC DNA]</scope>
    <source>
        <strain>ATCC 27184 / PCC 6803 / Kazusa</strain>
    </source>
</reference>
<comment type="function">
    <text evidence="1">Endonuclease that is involved in the suppression of homologous recombination and thus may have a key role in the control of bacterial genetic diversity.</text>
</comment>
<comment type="function">
    <text evidence="1">Acts as a ribosome collision sensor, splitting the ribosome into its 2 subunits. Detects stalled/collided 70S ribosomes which it binds and splits by an ATP-hydrolysis driven conformational change. Acts upstream of the ribosome quality control system (RQC), a ribosome-associated complex that mediates the extraction of incompletely synthesized nascent chains from stalled ribosomes and their subsequent degradation. Probably generates substrates for RQC.</text>
</comment>
<comment type="subunit">
    <text evidence="1">Homodimer. Binds to stalled ribosomes, contacting rRNA.</text>
</comment>
<comment type="similarity">
    <text evidence="1">Belongs to the DNA mismatch repair MutS family. MutS2 subfamily.</text>
</comment>